<reference key="1">
    <citation type="journal article" date="2001" name="Nature">
        <title>Complete genome sequence of a multiple drug resistant Salmonella enterica serovar Typhi CT18.</title>
        <authorList>
            <person name="Parkhill J."/>
            <person name="Dougan G."/>
            <person name="James K.D."/>
            <person name="Thomson N.R."/>
            <person name="Pickard D."/>
            <person name="Wain J."/>
            <person name="Churcher C.M."/>
            <person name="Mungall K.L."/>
            <person name="Bentley S.D."/>
            <person name="Holden M.T.G."/>
            <person name="Sebaihia M."/>
            <person name="Baker S."/>
            <person name="Basham D."/>
            <person name="Brooks K."/>
            <person name="Chillingworth T."/>
            <person name="Connerton P."/>
            <person name="Cronin A."/>
            <person name="Davis P."/>
            <person name="Davies R.M."/>
            <person name="Dowd L."/>
            <person name="White N."/>
            <person name="Farrar J."/>
            <person name="Feltwell T."/>
            <person name="Hamlin N."/>
            <person name="Haque A."/>
            <person name="Hien T.T."/>
            <person name="Holroyd S."/>
            <person name="Jagels K."/>
            <person name="Krogh A."/>
            <person name="Larsen T.S."/>
            <person name="Leather S."/>
            <person name="Moule S."/>
            <person name="O'Gaora P."/>
            <person name="Parry C."/>
            <person name="Quail M.A."/>
            <person name="Rutherford K.M."/>
            <person name="Simmonds M."/>
            <person name="Skelton J."/>
            <person name="Stevens K."/>
            <person name="Whitehead S."/>
            <person name="Barrell B.G."/>
        </authorList>
    </citation>
    <scope>NUCLEOTIDE SEQUENCE [LARGE SCALE GENOMIC DNA]</scope>
    <source>
        <strain>CT18</strain>
    </source>
</reference>
<reference key="2">
    <citation type="journal article" date="2003" name="J. Bacteriol.">
        <title>Comparative genomics of Salmonella enterica serovar Typhi strains Ty2 and CT18.</title>
        <authorList>
            <person name="Deng W."/>
            <person name="Liou S.-R."/>
            <person name="Plunkett G. III"/>
            <person name="Mayhew G.F."/>
            <person name="Rose D.J."/>
            <person name="Burland V."/>
            <person name="Kodoyianni V."/>
            <person name="Schwartz D.C."/>
            <person name="Blattner F.R."/>
        </authorList>
    </citation>
    <scope>NUCLEOTIDE SEQUENCE [LARGE SCALE GENOMIC DNA]</scope>
    <source>
        <strain>ATCC 700931 / Ty2</strain>
    </source>
</reference>
<keyword id="KW-0963">Cytoplasm</keyword>
<keyword id="KW-0269">Exonuclease</keyword>
<keyword id="KW-0378">Hydrolase</keyword>
<keyword id="KW-0540">Nuclease</keyword>
<evidence type="ECO:0000250" key="1"/>
<evidence type="ECO:0000255" key="2">
    <source>
        <dbReference type="HAMAP-Rule" id="MF_00045"/>
    </source>
</evidence>
<sequence>MSADENNLIWIDLEMTGLDPERDRIIEIATLVTDASLNILAEGPTIAVHQSDAQLALMDDWNVRTHTGSGLVDRVKASTMGERDAELATIEFLKTWVPAGKSPICGNSIGQDRRFLFKYMPELEAYFHYRYLDVSTLKELARRWKPEILAGFTKQGTHQAMDDIRESVAELAYYREHFIKL</sequence>
<feature type="initiator methionine" description="Removed" evidence="1">
    <location>
        <position position="1"/>
    </location>
</feature>
<feature type="chain" id="PRO_0000111068" description="Oligoribonuclease">
    <location>
        <begin position="2"/>
        <end position="181"/>
    </location>
</feature>
<feature type="domain" description="Exonuclease" evidence="2">
    <location>
        <begin position="8"/>
        <end position="171"/>
    </location>
</feature>
<feature type="active site" evidence="2">
    <location>
        <position position="129"/>
    </location>
</feature>
<protein>
    <recommendedName>
        <fullName evidence="2">Oligoribonuclease</fullName>
        <ecNumber evidence="2">3.1.15.-</ecNumber>
    </recommendedName>
</protein>
<dbReference type="EC" id="3.1.15.-" evidence="2"/>
<dbReference type="EMBL" id="AL513382">
    <property type="protein sequence ID" value="CAD06830.1"/>
    <property type="molecule type" value="Genomic_DNA"/>
</dbReference>
<dbReference type="EMBL" id="AE014613">
    <property type="protein sequence ID" value="AAO71853.1"/>
    <property type="molecule type" value="Genomic_DNA"/>
</dbReference>
<dbReference type="RefSeq" id="NP_458789.1">
    <property type="nucleotide sequence ID" value="NC_003198.1"/>
</dbReference>
<dbReference type="RefSeq" id="WP_001271546.1">
    <property type="nucleotide sequence ID" value="NZ_WSUR01000012.1"/>
</dbReference>
<dbReference type="SMR" id="P65600"/>
<dbReference type="STRING" id="220341.gene:17588528"/>
<dbReference type="KEGG" id="stt:t4402"/>
<dbReference type="KEGG" id="sty:STY4710"/>
<dbReference type="PATRIC" id="fig|220341.7.peg.4811"/>
<dbReference type="eggNOG" id="COG1949">
    <property type="taxonomic scope" value="Bacteria"/>
</dbReference>
<dbReference type="HOGENOM" id="CLU_064761_2_0_6"/>
<dbReference type="OMA" id="AFFHYRN"/>
<dbReference type="OrthoDB" id="9801329at2"/>
<dbReference type="Proteomes" id="UP000000541">
    <property type="component" value="Chromosome"/>
</dbReference>
<dbReference type="Proteomes" id="UP000002670">
    <property type="component" value="Chromosome"/>
</dbReference>
<dbReference type="GO" id="GO:0005737">
    <property type="term" value="C:cytoplasm"/>
    <property type="evidence" value="ECO:0007669"/>
    <property type="project" value="UniProtKB-SubCell"/>
</dbReference>
<dbReference type="GO" id="GO:0000175">
    <property type="term" value="F:3'-5'-RNA exonuclease activity"/>
    <property type="evidence" value="ECO:0007669"/>
    <property type="project" value="InterPro"/>
</dbReference>
<dbReference type="GO" id="GO:0003676">
    <property type="term" value="F:nucleic acid binding"/>
    <property type="evidence" value="ECO:0007669"/>
    <property type="project" value="InterPro"/>
</dbReference>
<dbReference type="GO" id="GO:0006259">
    <property type="term" value="P:DNA metabolic process"/>
    <property type="evidence" value="ECO:0007669"/>
    <property type="project" value="UniProtKB-ARBA"/>
</dbReference>
<dbReference type="CDD" id="cd06135">
    <property type="entry name" value="Orn"/>
    <property type="match status" value="1"/>
</dbReference>
<dbReference type="FunFam" id="3.30.420.10:FF:000003">
    <property type="entry name" value="Oligoribonuclease"/>
    <property type="match status" value="1"/>
</dbReference>
<dbReference type="Gene3D" id="3.30.420.10">
    <property type="entry name" value="Ribonuclease H-like superfamily/Ribonuclease H"/>
    <property type="match status" value="1"/>
</dbReference>
<dbReference type="HAMAP" id="MF_00045">
    <property type="entry name" value="Oligoribonuclease"/>
    <property type="match status" value="1"/>
</dbReference>
<dbReference type="InterPro" id="IPR013520">
    <property type="entry name" value="Exonuclease_RNaseT/DNA_pol3"/>
</dbReference>
<dbReference type="InterPro" id="IPR022894">
    <property type="entry name" value="Oligoribonuclease"/>
</dbReference>
<dbReference type="InterPro" id="IPR012337">
    <property type="entry name" value="RNaseH-like_sf"/>
</dbReference>
<dbReference type="InterPro" id="IPR036397">
    <property type="entry name" value="RNaseH_sf"/>
</dbReference>
<dbReference type="NCBIfam" id="NF003765">
    <property type="entry name" value="PRK05359.1"/>
    <property type="match status" value="1"/>
</dbReference>
<dbReference type="PANTHER" id="PTHR11046">
    <property type="entry name" value="OLIGORIBONUCLEASE, MITOCHONDRIAL"/>
    <property type="match status" value="1"/>
</dbReference>
<dbReference type="PANTHER" id="PTHR11046:SF0">
    <property type="entry name" value="OLIGORIBONUCLEASE, MITOCHONDRIAL"/>
    <property type="match status" value="1"/>
</dbReference>
<dbReference type="Pfam" id="PF00929">
    <property type="entry name" value="RNase_T"/>
    <property type="match status" value="1"/>
</dbReference>
<dbReference type="SMART" id="SM00479">
    <property type="entry name" value="EXOIII"/>
    <property type="match status" value="1"/>
</dbReference>
<dbReference type="SUPFAM" id="SSF53098">
    <property type="entry name" value="Ribonuclease H-like"/>
    <property type="match status" value="1"/>
</dbReference>
<accession>P65600</accession>
<accession>Q8XFY9</accession>
<organism>
    <name type="scientific">Salmonella typhi</name>
    <dbReference type="NCBI Taxonomy" id="90370"/>
    <lineage>
        <taxon>Bacteria</taxon>
        <taxon>Pseudomonadati</taxon>
        <taxon>Pseudomonadota</taxon>
        <taxon>Gammaproteobacteria</taxon>
        <taxon>Enterobacterales</taxon>
        <taxon>Enterobacteriaceae</taxon>
        <taxon>Salmonella</taxon>
    </lineage>
</organism>
<gene>
    <name evidence="2" type="primary">orn</name>
    <name type="ordered locus">STY4710</name>
    <name type="ordered locus">t4402</name>
</gene>
<proteinExistence type="inferred from homology"/>
<name>ORN_SALTI</name>
<comment type="function">
    <text evidence="2">3'-to-5' exoribonuclease specific for small oligoribonucleotides.</text>
</comment>
<comment type="subcellular location">
    <subcellularLocation>
        <location evidence="2">Cytoplasm</location>
    </subcellularLocation>
</comment>
<comment type="similarity">
    <text evidence="2">Belongs to the oligoribonuclease family.</text>
</comment>